<dbReference type="EC" id="2.1.1.228" evidence="1"/>
<dbReference type="EMBL" id="AP009152">
    <property type="protein sequence ID" value="BAG29412.1"/>
    <property type="molecule type" value="Genomic_DNA"/>
</dbReference>
<dbReference type="RefSeq" id="WP_012398133.1">
    <property type="nucleotide sequence ID" value="NC_010617.1"/>
</dbReference>
<dbReference type="SMR" id="B2GFY4"/>
<dbReference type="STRING" id="378753.KRH_10650"/>
<dbReference type="KEGG" id="krh:KRH_10650"/>
<dbReference type="eggNOG" id="COG0336">
    <property type="taxonomic scope" value="Bacteria"/>
</dbReference>
<dbReference type="HOGENOM" id="CLU_047363_0_0_11"/>
<dbReference type="OrthoDB" id="9807416at2"/>
<dbReference type="Proteomes" id="UP000008838">
    <property type="component" value="Chromosome"/>
</dbReference>
<dbReference type="GO" id="GO:0005829">
    <property type="term" value="C:cytosol"/>
    <property type="evidence" value="ECO:0007669"/>
    <property type="project" value="TreeGrafter"/>
</dbReference>
<dbReference type="GO" id="GO:0052906">
    <property type="term" value="F:tRNA (guanine(37)-N1)-methyltransferase activity"/>
    <property type="evidence" value="ECO:0007669"/>
    <property type="project" value="UniProtKB-UniRule"/>
</dbReference>
<dbReference type="GO" id="GO:0002939">
    <property type="term" value="P:tRNA N1-guanine methylation"/>
    <property type="evidence" value="ECO:0007669"/>
    <property type="project" value="TreeGrafter"/>
</dbReference>
<dbReference type="CDD" id="cd18080">
    <property type="entry name" value="TrmD-like"/>
    <property type="match status" value="1"/>
</dbReference>
<dbReference type="FunFam" id="1.10.1270.20:FF:000002">
    <property type="entry name" value="tRNA (guanine-N(1)-)-methyltransferase"/>
    <property type="match status" value="1"/>
</dbReference>
<dbReference type="Gene3D" id="3.40.1280.10">
    <property type="match status" value="2"/>
</dbReference>
<dbReference type="Gene3D" id="1.10.1270.20">
    <property type="entry name" value="tRNA(m1g37)methyltransferase, domain 2"/>
    <property type="match status" value="1"/>
</dbReference>
<dbReference type="HAMAP" id="MF_00605">
    <property type="entry name" value="TrmD"/>
    <property type="match status" value="1"/>
</dbReference>
<dbReference type="InterPro" id="IPR029028">
    <property type="entry name" value="Alpha/beta_knot_MTases"/>
</dbReference>
<dbReference type="InterPro" id="IPR023148">
    <property type="entry name" value="tRNA_m1G_MeTrfase_C_sf"/>
</dbReference>
<dbReference type="InterPro" id="IPR002649">
    <property type="entry name" value="tRNA_m1G_MeTrfase_TrmD"/>
</dbReference>
<dbReference type="InterPro" id="IPR029026">
    <property type="entry name" value="tRNA_m1G_MTases_N"/>
</dbReference>
<dbReference type="InterPro" id="IPR016009">
    <property type="entry name" value="tRNA_MeTrfase_TRMD/TRM10"/>
</dbReference>
<dbReference type="NCBIfam" id="NF000648">
    <property type="entry name" value="PRK00026.1"/>
    <property type="match status" value="1"/>
</dbReference>
<dbReference type="PANTHER" id="PTHR46417">
    <property type="entry name" value="TRNA (GUANINE-N(1)-)-METHYLTRANSFERASE"/>
    <property type="match status" value="1"/>
</dbReference>
<dbReference type="PANTHER" id="PTHR46417:SF1">
    <property type="entry name" value="TRNA (GUANINE-N(1)-)-METHYLTRANSFERASE"/>
    <property type="match status" value="1"/>
</dbReference>
<dbReference type="Pfam" id="PF01746">
    <property type="entry name" value="tRNA_m1G_MT"/>
    <property type="match status" value="2"/>
</dbReference>
<dbReference type="SUPFAM" id="SSF75217">
    <property type="entry name" value="alpha/beta knot"/>
    <property type="match status" value="2"/>
</dbReference>
<proteinExistence type="inferred from homology"/>
<feature type="chain" id="PRO_1000130181" description="tRNA (guanine-N(1)-)-methyltransferase">
    <location>
        <begin position="1"/>
        <end position="331"/>
    </location>
</feature>
<feature type="region of interest" description="Disordered" evidence="2">
    <location>
        <begin position="77"/>
        <end position="137"/>
    </location>
</feature>
<feature type="region of interest" description="Disordered" evidence="2">
    <location>
        <begin position="312"/>
        <end position="331"/>
    </location>
</feature>
<feature type="compositionally biased region" description="Low complexity" evidence="2">
    <location>
        <begin position="77"/>
        <end position="99"/>
    </location>
</feature>
<feature type="compositionally biased region" description="Low complexity" evidence="2">
    <location>
        <begin position="107"/>
        <end position="134"/>
    </location>
</feature>
<feature type="binding site" evidence="1">
    <location>
        <position position="169"/>
    </location>
    <ligand>
        <name>S-adenosyl-L-methionine</name>
        <dbReference type="ChEBI" id="CHEBI:59789"/>
    </ligand>
</feature>
<feature type="binding site" evidence="1">
    <location>
        <begin position="193"/>
        <end position="198"/>
    </location>
    <ligand>
        <name>S-adenosyl-L-methionine</name>
        <dbReference type="ChEBI" id="CHEBI:59789"/>
    </ligand>
</feature>
<evidence type="ECO:0000255" key="1">
    <source>
        <dbReference type="HAMAP-Rule" id="MF_00605"/>
    </source>
</evidence>
<evidence type="ECO:0000256" key="2">
    <source>
        <dbReference type="SAM" id="MobiDB-lite"/>
    </source>
</evidence>
<accession>B2GFY4</accession>
<sequence>MRIDVLSIFPEYLEPLKLSLIGKAVTDGLLQLQVTDPREFATDRHRTVDDTPYGGGAGMVMKPEPWARALESVLRAGSDTTARSGSTAATSASAQQATRLGPDDDAAQPGDAGQGTAAPDYARTGGTPGAGRAASSRPVLVVPSPAGEVFTQEVAYELAEEEHLVFACGRYEGIDERFIEWARDEVRVRPLSLGDYVLNGGEVAVLAMVEAVTRLVPGVIGNPESLDEESHTGGLLEYPVYTKPAQWRERTVPDTLLSGHHGRIARWRRDQQLERTARRRPDMVLALDPATLDRADLAVLAAEGFTLRDGQWQRCSPAPSEQAPEGARDMA</sequence>
<gene>
    <name evidence="1" type="primary">trmD</name>
    <name type="ordered locus">KRH_10650</name>
</gene>
<name>TRMD_KOCRD</name>
<keyword id="KW-0963">Cytoplasm</keyword>
<keyword id="KW-0489">Methyltransferase</keyword>
<keyword id="KW-1185">Reference proteome</keyword>
<keyword id="KW-0949">S-adenosyl-L-methionine</keyword>
<keyword id="KW-0808">Transferase</keyword>
<keyword id="KW-0819">tRNA processing</keyword>
<protein>
    <recommendedName>
        <fullName evidence="1">tRNA (guanine-N(1)-)-methyltransferase</fullName>
        <ecNumber evidence="1">2.1.1.228</ecNumber>
    </recommendedName>
    <alternativeName>
        <fullName evidence="1">M1G-methyltransferase</fullName>
    </alternativeName>
    <alternativeName>
        <fullName evidence="1">tRNA [GM37] methyltransferase</fullName>
    </alternativeName>
</protein>
<reference key="1">
    <citation type="journal article" date="2008" name="J. Bacteriol.">
        <title>Complete genome sequence of the soil actinomycete Kocuria rhizophila.</title>
        <authorList>
            <person name="Takarada H."/>
            <person name="Sekine M."/>
            <person name="Kosugi H."/>
            <person name="Matsuo Y."/>
            <person name="Fujisawa T."/>
            <person name="Omata S."/>
            <person name="Kishi E."/>
            <person name="Shimizu A."/>
            <person name="Tsukatani N."/>
            <person name="Tanikawa S."/>
            <person name="Fujita N."/>
            <person name="Harayama S."/>
        </authorList>
    </citation>
    <scope>NUCLEOTIDE SEQUENCE [LARGE SCALE GENOMIC DNA]</scope>
    <source>
        <strain>ATCC 9341 / DSM 348 / NBRC 103217 / DC2201</strain>
    </source>
</reference>
<comment type="function">
    <text evidence="1">Specifically methylates guanosine-37 in various tRNAs.</text>
</comment>
<comment type="catalytic activity">
    <reaction evidence="1">
        <text>guanosine(37) in tRNA + S-adenosyl-L-methionine = N(1)-methylguanosine(37) in tRNA + S-adenosyl-L-homocysteine + H(+)</text>
        <dbReference type="Rhea" id="RHEA:36899"/>
        <dbReference type="Rhea" id="RHEA-COMP:10145"/>
        <dbReference type="Rhea" id="RHEA-COMP:10147"/>
        <dbReference type="ChEBI" id="CHEBI:15378"/>
        <dbReference type="ChEBI" id="CHEBI:57856"/>
        <dbReference type="ChEBI" id="CHEBI:59789"/>
        <dbReference type="ChEBI" id="CHEBI:73542"/>
        <dbReference type="ChEBI" id="CHEBI:74269"/>
        <dbReference type="EC" id="2.1.1.228"/>
    </reaction>
</comment>
<comment type="subunit">
    <text evidence="1">Homodimer.</text>
</comment>
<comment type="subcellular location">
    <subcellularLocation>
        <location evidence="1">Cytoplasm</location>
    </subcellularLocation>
</comment>
<comment type="similarity">
    <text evidence="1">Belongs to the RNA methyltransferase TrmD family.</text>
</comment>
<organism>
    <name type="scientific">Kocuria rhizophila (strain ATCC 9341 / DSM 348 / NBRC 103217 / DC2201)</name>
    <dbReference type="NCBI Taxonomy" id="378753"/>
    <lineage>
        <taxon>Bacteria</taxon>
        <taxon>Bacillati</taxon>
        <taxon>Actinomycetota</taxon>
        <taxon>Actinomycetes</taxon>
        <taxon>Micrococcales</taxon>
        <taxon>Micrococcaceae</taxon>
        <taxon>Kocuria</taxon>
    </lineage>
</organism>